<organism>
    <name type="scientific">Fowlpox virus (strain NVSL)</name>
    <name type="common">FPV</name>
    <dbReference type="NCBI Taxonomy" id="928301"/>
    <lineage>
        <taxon>Viruses</taxon>
        <taxon>Varidnaviria</taxon>
        <taxon>Bamfordvirae</taxon>
        <taxon>Nucleocytoviricota</taxon>
        <taxon>Pokkesviricetes</taxon>
        <taxon>Chitovirales</taxon>
        <taxon>Poxviridae</taxon>
        <taxon>Chordopoxvirinae</taxon>
        <taxon>Avipoxvirus</taxon>
        <taxon>Fowlpox virus</taxon>
    </lineage>
</organism>
<gene>
    <name type="ordered locus">FPV184</name>
</gene>
<organismHost>
    <name type="scientific">Vertebrata</name>
    <dbReference type="NCBI Taxonomy" id="7742"/>
</organismHost>
<comment type="similarity">
    <text evidence="2">Belongs to the chordopoxvirinae A19 family.</text>
</comment>
<sequence>MADSTAGAKKRKKRSTSATSTRKEPPTVIPEDECTTCSICQSKLVMFSGVSKYKLSDYLNTGKVFTNSNIRCKACGSSLCHLRDLSKS</sequence>
<reference key="1">
    <citation type="journal article" date="2000" name="J. Virol.">
        <title>The genome of fowlpox virus.</title>
        <authorList>
            <person name="Afonso C.L."/>
            <person name="Tulman E.R."/>
            <person name="Lu Z."/>
            <person name="Zsak L."/>
            <person name="Kutish G.F."/>
            <person name="Rock D.L."/>
        </authorList>
    </citation>
    <scope>NUCLEOTIDE SEQUENCE [LARGE SCALE GENOMIC DNA]</scope>
</reference>
<name>A19_FOWPN</name>
<feature type="chain" id="PRO_0000099265" description="Protein A19 homolog">
    <location>
        <begin position="1"/>
        <end position="88"/>
    </location>
</feature>
<feature type="region of interest" description="Disordered" evidence="1">
    <location>
        <begin position="1"/>
        <end position="28"/>
    </location>
</feature>
<protein>
    <recommendedName>
        <fullName>Protein A19 homolog</fullName>
    </recommendedName>
</protein>
<accession>Q9J549</accession>
<evidence type="ECO:0000256" key="1">
    <source>
        <dbReference type="SAM" id="MobiDB-lite"/>
    </source>
</evidence>
<evidence type="ECO:0000305" key="2"/>
<dbReference type="EMBL" id="AF198100">
    <property type="protein sequence ID" value="AAF44528.1"/>
    <property type="molecule type" value="Genomic_DNA"/>
</dbReference>
<dbReference type="RefSeq" id="NP_039147.1">
    <property type="nucleotide sequence ID" value="NC_002188.1"/>
</dbReference>
<dbReference type="GeneID" id="1486756"/>
<dbReference type="KEGG" id="vg:1486756"/>
<dbReference type="Proteomes" id="UP000008597">
    <property type="component" value="Segment"/>
</dbReference>
<dbReference type="InterPro" id="IPR007769">
    <property type="entry name" value="Poxvirus_A19"/>
</dbReference>
<dbReference type="Pfam" id="PF05077">
    <property type="entry name" value="DUF678"/>
    <property type="match status" value="1"/>
</dbReference>
<keyword id="KW-1185">Reference proteome</keyword>
<proteinExistence type="inferred from homology"/>